<sequence>MLRKAIADIEAKYLRTDLPEMRAGDSVRVHTKIKEGDKERIQVFEGVVIAYRKGAPGSSMFTVRKVSYGVGVERMFPVHSPRIDKIEVVGHGGVRRSRLYFLRNLQGKAARLHQEEGPGAADAAHAAPTPA</sequence>
<feature type="chain" id="PRO_0000252495" description="Large ribosomal subunit protein bL19">
    <location>
        <begin position="1"/>
        <end position="131"/>
    </location>
</feature>
<gene>
    <name evidence="1" type="primary">rplS</name>
    <name type="ordered locus">Adeh_1912</name>
</gene>
<keyword id="KW-1185">Reference proteome</keyword>
<keyword id="KW-0687">Ribonucleoprotein</keyword>
<keyword id="KW-0689">Ribosomal protein</keyword>
<protein>
    <recommendedName>
        <fullName evidence="1">Large ribosomal subunit protein bL19</fullName>
    </recommendedName>
    <alternativeName>
        <fullName evidence="2">50S ribosomal protein L19</fullName>
    </alternativeName>
</protein>
<accession>Q2IJ55</accession>
<evidence type="ECO:0000255" key="1">
    <source>
        <dbReference type="HAMAP-Rule" id="MF_00402"/>
    </source>
</evidence>
<evidence type="ECO:0000305" key="2"/>
<proteinExistence type="inferred from homology"/>
<organism>
    <name type="scientific">Anaeromyxobacter dehalogenans (strain 2CP-C)</name>
    <dbReference type="NCBI Taxonomy" id="290397"/>
    <lineage>
        <taxon>Bacteria</taxon>
        <taxon>Pseudomonadati</taxon>
        <taxon>Myxococcota</taxon>
        <taxon>Myxococcia</taxon>
        <taxon>Myxococcales</taxon>
        <taxon>Cystobacterineae</taxon>
        <taxon>Anaeromyxobacteraceae</taxon>
        <taxon>Anaeromyxobacter</taxon>
    </lineage>
</organism>
<dbReference type="EMBL" id="CP000251">
    <property type="protein sequence ID" value="ABC81683.1"/>
    <property type="molecule type" value="Genomic_DNA"/>
</dbReference>
<dbReference type="RefSeq" id="WP_011420966.1">
    <property type="nucleotide sequence ID" value="NC_007760.1"/>
</dbReference>
<dbReference type="SMR" id="Q2IJ55"/>
<dbReference type="STRING" id="290397.Adeh_1912"/>
<dbReference type="KEGG" id="ade:Adeh_1912"/>
<dbReference type="eggNOG" id="COG0335">
    <property type="taxonomic scope" value="Bacteria"/>
</dbReference>
<dbReference type="HOGENOM" id="CLU_103507_2_1_7"/>
<dbReference type="OrthoDB" id="9803541at2"/>
<dbReference type="Proteomes" id="UP000001935">
    <property type="component" value="Chromosome"/>
</dbReference>
<dbReference type="GO" id="GO:0022625">
    <property type="term" value="C:cytosolic large ribosomal subunit"/>
    <property type="evidence" value="ECO:0007669"/>
    <property type="project" value="TreeGrafter"/>
</dbReference>
<dbReference type="GO" id="GO:0003735">
    <property type="term" value="F:structural constituent of ribosome"/>
    <property type="evidence" value="ECO:0007669"/>
    <property type="project" value="InterPro"/>
</dbReference>
<dbReference type="GO" id="GO:0006412">
    <property type="term" value="P:translation"/>
    <property type="evidence" value="ECO:0007669"/>
    <property type="project" value="UniProtKB-UniRule"/>
</dbReference>
<dbReference type="FunFam" id="2.30.30.790:FF:000001">
    <property type="entry name" value="50S ribosomal protein L19"/>
    <property type="match status" value="1"/>
</dbReference>
<dbReference type="Gene3D" id="2.30.30.790">
    <property type="match status" value="1"/>
</dbReference>
<dbReference type="HAMAP" id="MF_00402">
    <property type="entry name" value="Ribosomal_bL19"/>
    <property type="match status" value="1"/>
</dbReference>
<dbReference type="InterPro" id="IPR001857">
    <property type="entry name" value="Ribosomal_bL19"/>
</dbReference>
<dbReference type="InterPro" id="IPR038657">
    <property type="entry name" value="Ribosomal_bL19_sf"/>
</dbReference>
<dbReference type="InterPro" id="IPR008991">
    <property type="entry name" value="Translation_prot_SH3-like_sf"/>
</dbReference>
<dbReference type="NCBIfam" id="TIGR01024">
    <property type="entry name" value="rplS_bact"/>
    <property type="match status" value="1"/>
</dbReference>
<dbReference type="PANTHER" id="PTHR15680:SF9">
    <property type="entry name" value="LARGE RIBOSOMAL SUBUNIT PROTEIN BL19M"/>
    <property type="match status" value="1"/>
</dbReference>
<dbReference type="PANTHER" id="PTHR15680">
    <property type="entry name" value="RIBOSOMAL PROTEIN L19"/>
    <property type="match status" value="1"/>
</dbReference>
<dbReference type="Pfam" id="PF01245">
    <property type="entry name" value="Ribosomal_L19"/>
    <property type="match status" value="1"/>
</dbReference>
<dbReference type="PIRSF" id="PIRSF002191">
    <property type="entry name" value="Ribosomal_L19"/>
    <property type="match status" value="1"/>
</dbReference>
<dbReference type="PRINTS" id="PR00061">
    <property type="entry name" value="RIBOSOMALL19"/>
</dbReference>
<dbReference type="SUPFAM" id="SSF50104">
    <property type="entry name" value="Translation proteins SH3-like domain"/>
    <property type="match status" value="1"/>
</dbReference>
<reference key="1">
    <citation type="submission" date="2006-01" db="EMBL/GenBank/DDBJ databases">
        <title>Complete sequence of Anaeromyxobacter dehalogenans 2CP-C.</title>
        <authorList>
            <person name="Copeland A."/>
            <person name="Lucas S."/>
            <person name="Lapidus A."/>
            <person name="Barry K."/>
            <person name="Detter J.C."/>
            <person name="Glavina T."/>
            <person name="Hammon N."/>
            <person name="Israni S."/>
            <person name="Pitluck S."/>
            <person name="Brettin T."/>
            <person name="Bruce D."/>
            <person name="Han C."/>
            <person name="Tapia R."/>
            <person name="Gilna P."/>
            <person name="Kiss H."/>
            <person name="Schmutz J."/>
            <person name="Larimer F."/>
            <person name="Land M."/>
            <person name="Kyrpides N."/>
            <person name="Anderson I."/>
            <person name="Sanford R.A."/>
            <person name="Ritalahti K.M."/>
            <person name="Thomas H.S."/>
            <person name="Kirby J.R."/>
            <person name="Zhulin I.B."/>
            <person name="Loeffler F.E."/>
            <person name="Richardson P."/>
        </authorList>
    </citation>
    <scope>NUCLEOTIDE SEQUENCE [LARGE SCALE GENOMIC DNA]</scope>
    <source>
        <strain>2CP-C</strain>
    </source>
</reference>
<comment type="function">
    <text evidence="1">This protein is located at the 30S-50S ribosomal subunit interface and may play a role in the structure and function of the aminoacyl-tRNA binding site.</text>
</comment>
<comment type="similarity">
    <text evidence="1">Belongs to the bacterial ribosomal protein bL19 family.</text>
</comment>
<name>RL19_ANADE</name>